<dbReference type="EMBL" id="AP006878">
    <property type="protein sequence ID" value="BAD85727.1"/>
    <property type="molecule type" value="Genomic_DNA"/>
</dbReference>
<dbReference type="RefSeq" id="WP_011250489.1">
    <property type="nucleotide sequence ID" value="NC_006624.1"/>
</dbReference>
<dbReference type="PDB" id="6SKF">
    <property type="method" value="EM"/>
    <property type="resolution" value="2.95 A"/>
    <property type="chains" value="Au=1-133"/>
</dbReference>
<dbReference type="PDB" id="6SKG">
    <property type="method" value="EM"/>
    <property type="resolution" value="2.65 A"/>
    <property type="chains" value="Au=1-133"/>
</dbReference>
<dbReference type="PDB" id="6TH6">
    <property type="method" value="EM"/>
    <property type="resolution" value="2.55 A"/>
    <property type="chains" value="Au=1-133"/>
</dbReference>
<dbReference type="PDBsum" id="6SKF"/>
<dbReference type="PDBsum" id="6SKG"/>
<dbReference type="PDBsum" id="6TH6"/>
<dbReference type="EMDB" id="EMD-10223"/>
<dbReference type="EMDB" id="EMD-10224"/>
<dbReference type="EMDB" id="EMD-10503"/>
<dbReference type="SMR" id="Q5JDH3"/>
<dbReference type="FunCoup" id="Q5JDH3">
    <property type="interactions" value="130"/>
</dbReference>
<dbReference type="IntAct" id="Q5JDH3">
    <property type="interactions" value="1"/>
</dbReference>
<dbReference type="MINT" id="Q5JDH3"/>
<dbReference type="STRING" id="69014.TK1538"/>
<dbReference type="EnsemblBacteria" id="BAD85727">
    <property type="protein sequence ID" value="BAD85727"/>
    <property type="gene ID" value="TK1538"/>
</dbReference>
<dbReference type="GeneID" id="78448066"/>
<dbReference type="KEGG" id="tko:TK1538"/>
<dbReference type="PATRIC" id="fig|69014.16.peg.1498"/>
<dbReference type="eggNOG" id="arCOG04099">
    <property type="taxonomic scope" value="Archaea"/>
</dbReference>
<dbReference type="HOGENOM" id="CLU_097347_1_1_2"/>
<dbReference type="InParanoid" id="Q5JDH3"/>
<dbReference type="OrthoDB" id="30559at2157"/>
<dbReference type="PhylomeDB" id="Q5JDH3"/>
<dbReference type="Proteomes" id="UP000000536">
    <property type="component" value="Chromosome"/>
</dbReference>
<dbReference type="GO" id="GO:0022627">
    <property type="term" value="C:cytosolic small ribosomal subunit"/>
    <property type="evidence" value="ECO:0000318"/>
    <property type="project" value="GO_Central"/>
</dbReference>
<dbReference type="GO" id="GO:0019843">
    <property type="term" value="F:rRNA binding"/>
    <property type="evidence" value="ECO:0007669"/>
    <property type="project" value="UniProtKB-UniRule"/>
</dbReference>
<dbReference type="GO" id="GO:0003735">
    <property type="term" value="F:structural constituent of ribosome"/>
    <property type="evidence" value="ECO:0000318"/>
    <property type="project" value="GO_Central"/>
</dbReference>
<dbReference type="GO" id="GO:0000028">
    <property type="term" value="P:ribosomal small subunit assembly"/>
    <property type="evidence" value="ECO:0000318"/>
    <property type="project" value="GO_Central"/>
</dbReference>
<dbReference type="GO" id="GO:0006412">
    <property type="term" value="P:translation"/>
    <property type="evidence" value="ECO:0007669"/>
    <property type="project" value="UniProtKB-UniRule"/>
</dbReference>
<dbReference type="FunFam" id="3.30.860.10:FF:000002">
    <property type="entry name" value="40S ribosomal protein S15"/>
    <property type="match status" value="1"/>
</dbReference>
<dbReference type="Gene3D" id="3.30.860.10">
    <property type="entry name" value="30s Ribosomal Protein S19, Chain A"/>
    <property type="match status" value="1"/>
</dbReference>
<dbReference type="HAMAP" id="MF_00531">
    <property type="entry name" value="Ribosomal_uS19"/>
    <property type="match status" value="1"/>
</dbReference>
<dbReference type="InterPro" id="IPR002222">
    <property type="entry name" value="Ribosomal_uS19"/>
</dbReference>
<dbReference type="InterPro" id="IPR005732">
    <property type="entry name" value="Ribosomal_uS19_bac-type"/>
</dbReference>
<dbReference type="InterPro" id="IPR020934">
    <property type="entry name" value="Ribosomal_uS19_CS"/>
</dbReference>
<dbReference type="InterPro" id="IPR005713">
    <property type="entry name" value="Ribosomal_uS19_euk/arc"/>
</dbReference>
<dbReference type="InterPro" id="IPR023575">
    <property type="entry name" value="Ribosomal_uS19_SF"/>
</dbReference>
<dbReference type="NCBIfam" id="NF003121">
    <property type="entry name" value="PRK04038.1"/>
    <property type="match status" value="1"/>
</dbReference>
<dbReference type="NCBIfam" id="TIGR01050">
    <property type="entry name" value="rpsS_bact"/>
    <property type="match status" value="1"/>
</dbReference>
<dbReference type="NCBIfam" id="TIGR01025">
    <property type="entry name" value="uS19_arch"/>
    <property type="match status" value="1"/>
</dbReference>
<dbReference type="PANTHER" id="PTHR11880">
    <property type="entry name" value="RIBOSOMAL PROTEIN S19P FAMILY MEMBER"/>
    <property type="match status" value="1"/>
</dbReference>
<dbReference type="PANTHER" id="PTHR11880:SF2">
    <property type="entry name" value="SMALL RIBOSOMAL SUBUNIT PROTEIN US19"/>
    <property type="match status" value="1"/>
</dbReference>
<dbReference type="Pfam" id="PF00203">
    <property type="entry name" value="Ribosomal_S19"/>
    <property type="match status" value="1"/>
</dbReference>
<dbReference type="PIRSF" id="PIRSF002144">
    <property type="entry name" value="Ribosomal_S19"/>
    <property type="match status" value="1"/>
</dbReference>
<dbReference type="PRINTS" id="PR00975">
    <property type="entry name" value="RIBOSOMALS19"/>
</dbReference>
<dbReference type="SUPFAM" id="SSF54570">
    <property type="entry name" value="Ribosomal protein S19"/>
    <property type="match status" value="1"/>
</dbReference>
<dbReference type="PROSITE" id="PS00323">
    <property type="entry name" value="RIBOSOMAL_S19"/>
    <property type="match status" value="1"/>
</dbReference>
<accession>Q5JDH3</accession>
<feature type="chain" id="PRO_0000130013" description="Small ribosomal subunit protein uS19">
    <location>
        <begin position="1"/>
        <end position="133"/>
    </location>
</feature>
<keyword id="KW-0002">3D-structure</keyword>
<keyword id="KW-1185">Reference proteome</keyword>
<keyword id="KW-0687">Ribonucleoprotein</keyword>
<keyword id="KW-0689">Ribosomal protein</keyword>
<keyword id="KW-0694">RNA-binding</keyword>
<keyword id="KW-0699">rRNA-binding</keyword>
<evidence type="ECO:0000255" key="1">
    <source>
        <dbReference type="HAMAP-Rule" id="MF_00531"/>
    </source>
</evidence>
<evidence type="ECO:0000269" key="2">
    <source>
    </source>
</evidence>
<evidence type="ECO:0000305" key="3"/>
<evidence type="ECO:0007744" key="4">
    <source>
        <dbReference type="PDB" id="6SKF"/>
    </source>
</evidence>
<evidence type="ECO:0007744" key="5">
    <source>
        <dbReference type="PDB" id="6SKG"/>
    </source>
</evidence>
<evidence type="ECO:0007744" key="6">
    <source>
        <dbReference type="PDB" id="6TH6"/>
    </source>
</evidence>
<reference key="1">
    <citation type="journal article" date="2005" name="Genome Res.">
        <title>Complete genome sequence of the hyperthermophilic archaeon Thermococcus kodakaraensis KOD1 and comparison with Pyrococcus genomes.</title>
        <authorList>
            <person name="Fukui T."/>
            <person name="Atomi H."/>
            <person name="Kanai T."/>
            <person name="Matsumi R."/>
            <person name="Fujiwara S."/>
            <person name="Imanaka T."/>
        </authorList>
    </citation>
    <scope>NUCLEOTIDE SEQUENCE [LARGE SCALE GENOMIC DNA]</scope>
    <source>
        <strain>ATCC BAA-918 / JCM 12380 / KOD1</strain>
    </source>
</reference>
<reference evidence="4 5 6" key="2">
    <citation type="journal article" date="2020" name="Nature">
        <title>Dynamic RNA acetylation revealed by quantitative cross-evolutionary mapping.</title>
        <authorList>
            <person name="Sas-Chen A."/>
            <person name="Thomas J.M."/>
            <person name="Matzov D."/>
            <person name="Taoka M."/>
            <person name="Nance K.D."/>
            <person name="Nir R."/>
            <person name="Bryson K.M."/>
            <person name="Shachar R."/>
            <person name="Liman G.L.S."/>
            <person name="Burkhart B.W."/>
            <person name="Gamage S.T."/>
            <person name="Nobe Y."/>
            <person name="Briney C.A."/>
            <person name="Levy M.J."/>
            <person name="Fuchs R.T."/>
            <person name="Robb G.B."/>
            <person name="Hartmann J."/>
            <person name="Sharma S."/>
            <person name="Lin Q."/>
            <person name="Florens L."/>
            <person name="Washburn M.P."/>
            <person name="Isobe T."/>
            <person name="Santangelo T.J."/>
            <person name="Shalev-Benami M."/>
            <person name="Meier J.L."/>
            <person name="Schwartz S."/>
        </authorList>
    </citation>
    <scope>STRUCTURE BY ELECTRON MICROSCOPY (2.55 ANGSTROMS) IN 70S RIBOSOME</scope>
    <scope>SUBUNIT</scope>
    <source>
        <strain>ATCC BAA-918 / TS559</strain>
    </source>
</reference>
<name>RS19_THEKO</name>
<comment type="function">
    <text evidence="1">Protein S19 forms a complex with S13 that binds strongly to the 16S ribosomal RNA.</text>
</comment>
<comment type="subunit">
    <text evidence="2">Part of the 30S ribosomal subunit.</text>
</comment>
<comment type="similarity">
    <text evidence="1">Belongs to the universal ribosomal protein uS19 family.</text>
</comment>
<gene>
    <name evidence="1" type="primary">rps19</name>
    <name type="ordered locus">TK1538</name>
</gene>
<organism>
    <name type="scientific">Thermococcus kodakarensis (strain ATCC BAA-918 / JCM 12380 / KOD1)</name>
    <name type="common">Pyrococcus kodakaraensis (strain KOD1)</name>
    <dbReference type="NCBI Taxonomy" id="69014"/>
    <lineage>
        <taxon>Archaea</taxon>
        <taxon>Methanobacteriati</taxon>
        <taxon>Methanobacteriota</taxon>
        <taxon>Thermococci</taxon>
        <taxon>Thermococcales</taxon>
        <taxon>Thermococcaceae</taxon>
        <taxon>Thermococcus</taxon>
    </lineage>
</organism>
<protein>
    <recommendedName>
        <fullName evidence="1">Small ribosomal subunit protein uS19</fullName>
    </recommendedName>
    <alternativeName>
        <fullName evidence="3">30S ribosomal protein S19</fullName>
    </alternativeName>
</protein>
<sequence length="133" mass="15421">MARKKEFRYRGYTLDELLNMSLEEFAKLLPSRQRRSLKRGLSPEQKKLLRKIRLAKKGKYNKPIRTHSRDMIVLPEMVGMTIHVYNGKEFVPVEIKEEMIGHYLGEFAMTRKVVQHGSPGVGATRSSMFVAVK</sequence>
<proteinExistence type="evidence at protein level"/>